<accession>Q3J1H1</accession>
<keyword id="KW-0012">Acyltransferase</keyword>
<keyword id="KW-0963">Cytoplasm</keyword>
<keyword id="KW-1185">Reference proteome</keyword>
<keyword id="KW-0808">Transferase</keyword>
<feature type="chain" id="PRO_0000258087" description="Leucyl/phenylalanyl-tRNA--protein transferase">
    <location>
        <begin position="1"/>
        <end position="214"/>
    </location>
</feature>
<proteinExistence type="inferred from homology"/>
<organism>
    <name type="scientific">Cereibacter sphaeroides (strain ATCC 17023 / DSM 158 / JCM 6121 / CCUG 31486 / LMG 2827 / NBRC 12203 / NCIMB 8253 / ATH 2.4.1.)</name>
    <name type="common">Rhodobacter sphaeroides</name>
    <dbReference type="NCBI Taxonomy" id="272943"/>
    <lineage>
        <taxon>Bacteria</taxon>
        <taxon>Pseudomonadati</taxon>
        <taxon>Pseudomonadota</taxon>
        <taxon>Alphaproteobacteria</taxon>
        <taxon>Rhodobacterales</taxon>
        <taxon>Paracoccaceae</taxon>
        <taxon>Cereibacter</taxon>
    </lineage>
</organism>
<sequence length="214" mass="24180">MKPPALTPRLLLRAYALGIFPMAESRDDPEIHWIDPRHRGIFPLDGFHISRSLARRIRRMDWRVSVDEDFAATVEACADREETWINPTIFRLYVELHALGHAHSLEVREGETLVGGVYGVTLGRAFFGESMFSHRTDASKVALAFLIDRLRAGGFTLFDTQFLTPHLASLGAIEIRRSDYHQRLTEALEGNASFTPEGYWADPASVVQRNSQTS</sequence>
<reference key="1">
    <citation type="submission" date="2005-09" db="EMBL/GenBank/DDBJ databases">
        <title>Complete sequence of chromosome 1 of Rhodobacter sphaeroides 2.4.1.</title>
        <authorList>
            <person name="Copeland A."/>
            <person name="Lucas S."/>
            <person name="Lapidus A."/>
            <person name="Barry K."/>
            <person name="Detter J.C."/>
            <person name="Glavina T."/>
            <person name="Hammon N."/>
            <person name="Israni S."/>
            <person name="Pitluck S."/>
            <person name="Richardson P."/>
            <person name="Mackenzie C."/>
            <person name="Choudhary M."/>
            <person name="Larimer F."/>
            <person name="Hauser L.J."/>
            <person name="Land M."/>
            <person name="Donohue T.J."/>
            <person name="Kaplan S."/>
        </authorList>
    </citation>
    <scope>NUCLEOTIDE SEQUENCE [LARGE SCALE GENOMIC DNA]</scope>
    <source>
        <strain>ATCC 17023 / DSM 158 / JCM 6121 / CCUG 31486 / LMG 2827 / NBRC 12203 / NCIMB 8253 / ATH 2.4.1.</strain>
    </source>
</reference>
<protein>
    <recommendedName>
        <fullName evidence="1">Leucyl/phenylalanyl-tRNA--protein transferase</fullName>
        <ecNumber evidence="1">2.3.2.6</ecNumber>
    </recommendedName>
    <alternativeName>
        <fullName evidence="1">L/F-transferase</fullName>
    </alternativeName>
    <alternativeName>
        <fullName evidence="1">Leucyltransferase</fullName>
    </alternativeName>
    <alternativeName>
        <fullName evidence="1">Phenyalanyltransferase</fullName>
    </alternativeName>
</protein>
<evidence type="ECO:0000255" key="1">
    <source>
        <dbReference type="HAMAP-Rule" id="MF_00688"/>
    </source>
</evidence>
<dbReference type="EC" id="2.3.2.6" evidence="1"/>
<dbReference type="EMBL" id="CP000143">
    <property type="protein sequence ID" value="ABA79363.1"/>
    <property type="molecule type" value="Genomic_DNA"/>
</dbReference>
<dbReference type="RefSeq" id="WP_011338055.1">
    <property type="nucleotide sequence ID" value="NC_007493.2"/>
</dbReference>
<dbReference type="RefSeq" id="YP_353264.1">
    <property type="nucleotide sequence ID" value="NC_007493.2"/>
</dbReference>
<dbReference type="SMR" id="Q3J1H1"/>
<dbReference type="STRING" id="272943.RSP_0192"/>
<dbReference type="EnsemblBacteria" id="ABA79363">
    <property type="protein sequence ID" value="ABA79363"/>
    <property type="gene ID" value="RSP_0192"/>
</dbReference>
<dbReference type="GeneID" id="3719481"/>
<dbReference type="KEGG" id="rsp:RSP_0192"/>
<dbReference type="PATRIC" id="fig|272943.9.peg.2135"/>
<dbReference type="eggNOG" id="COG2360">
    <property type="taxonomic scope" value="Bacteria"/>
</dbReference>
<dbReference type="OrthoDB" id="9790282at2"/>
<dbReference type="PhylomeDB" id="Q3J1H1"/>
<dbReference type="Proteomes" id="UP000002703">
    <property type="component" value="Chromosome 1"/>
</dbReference>
<dbReference type="GO" id="GO:0005737">
    <property type="term" value="C:cytoplasm"/>
    <property type="evidence" value="ECO:0007669"/>
    <property type="project" value="UniProtKB-SubCell"/>
</dbReference>
<dbReference type="GO" id="GO:0008914">
    <property type="term" value="F:leucyl-tRNA--protein transferase activity"/>
    <property type="evidence" value="ECO:0007669"/>
    <property type="project" value="UniProtKB-UniRule"/>
</dbReference>
<dbReference type="GO" id="GO:0030163">
    <property type="term" value="P:protein catabolic process"/>
    <property type="evidence" value="ECO:0007669"/>
    <property type="project" value="UniProtKB-UniRule"/>
</dbReference>
<dbReference type="FunFam" id="3.40.630.70:FF:000001">
    <property type="entry name" value="Leucyl/phenylalanyl-tRNA--protein transferase"/>
    <property type="match status" value="1"/>
</dbReference>
<dbReference type="Gene3D" id="3.40.630.70">
    <property type="entry name" value="Leucyl/phenylalanyl-tRNA-protein transferase, C-terminal domain"/>
    <property type="match status" value="1"/>
</dbReference>
<dbReference type="HAMAP" id="MF_00688">
    <property type="entry name" value="Leu_Phe_trans"/>
    <property type="match status" value="1"/>
</dbReference>
<dbReference type="InterPro" id="IPR016181">
    <property type="entry name" value="Acyl_CoA_acyltransferase"/>
</dbReference>
<dbReference type="InterPro" id="IPR004616">
    <property type="entry name" value="Leu/Phe-tRNA_Trfase"/>
</dbReference>
<dbReference type="InterPro" id="IPR042203">
    <property type="entry name" value="Leu/Phe-tRNA_Trfase_C"/>
</dbReference>
<dbReference type="NCBIfam" id="TIGR00667">
    <property type="entry name" value="aat"/>
    <property type="match status" value="1"/>
</dbReference>
<dbReference type="PANTHER" id="PTHR30098">
    <property type="entry name" value="LEUCYL/PHENYLALANYL-TRNA--PROTEIN TRANSFERASE"/>
    <property type="match status" value="1"/>
</dbReference>
<dbReference type="PANTHER" id="PTHR30098:SF2">
    <property type="entry name" value="LEUCYL_PHENYLALANYL-TRNA--PROTEIN TRANSFERASE"/>
    <property type="match status" value="1"/>
</dbReference>
<dbReference type="Pfam" id="PF03588">
    <property type="entry name" value="Leu_Phe_trans"/>
    <property type="match status" value="1"/>
</dbReference>
<dbReference type="SUPFAM" id="SSF55729">
    <property type="entry name" value="Acyl-CoA N-acyltransferases (Nat)"/>
    <property type="match status" value="1"/>
</dbReference>
<gene>
    <name evidence="1" type="primary">aat</name>
    <name type="ordered locus">RHOS4_17950</name>
    <name type="ORF">RSP_0192</name>
</gene>
<name>LFTR_CERS4</name>
<comment type="function">
    <text evidence="1">Functions in the N-end rule pathway of protein degradation where it conjugates Leu, Phe and, less efficiently, Met from aminoacyl-tRNAs to the N-termini of proteins containing an N-terminal arginine or lysine.</text>
</comment>
<comment type="catalytic activity">
    <reaction evidence="1">
        <text>N-terminal L-lysyl-[protein] + L-leucyl-tRNA(Leu) = N-terminal L-leucyl-L-lysyl-[protein] + tRNA(Leu) + H(+)</text>
        <dbReference type="Rhea" id="RHEA:12340"/>
        <dbReference type="Rhea" id="RHEA-COMP:9613"/>
        <dbReference type="Rhea" id="RHEA-COMP:9622"/>
        <dbReference type="Rhea" id="RHEA-COMP:12670"/>
        <dbReference type="Rhea" id="RHEA-COMP:12671"/>
        <dbReference type="ChEBI" id="CHEBI:15378"/>
        <dbReference type="ChEBI" id="CHEBI:65249"/>
        <dbReference type="ChEBI" id="CHEBI:78442"/>
        <dbReference type="ChEBI" id="CHEBI:78494"/>
        <dbReference type="ChEBI" id="CHEBI:133043"/>
        <dbReference type="EC" id="2.3.2.6"/>
    </reaction>
</comment>
<comment type="catalytic activity">
    <reaction evidence="1">
        <text>N-terminal L-arginyl-[protein] + L-leucyl-tRNA(Leu) = N-terminal L-leucyl-L-arginyl-[protein] + tRNA(Leu) + H(+)</text>
        <dbReference type="Rhea" id="RHEA:50416"/>
        <dbReference type="Rhea" id="RHEA-COMP:9613"/>
        <dbReference type="Rhea" id="RHEA-COMP:9622"/>
        <dbReference type="Rhea" id="RHEA-COMP:12672"/>
        <dbReference type="Rhea" id="RHEA-COMP:12673"/>
        <dbReference type="ChEBI" id="CHEBI:15378"/>
        <dbReference type="ChEBI" id="CHEBI:64719"/>
        <dbReference type="ChEBI" id="CHEBI:78442"/>
        <dbReference type="ChEBI" id="CHEBI:78494"/>
        <dbReference type="ChEBI" id="CHEBI:133044"/>
        <dbReference type="EC" id="2.3.2.6"/>
    </reaction>
</comment>
<comment type="catalytic activity">
    <reaction evidence="1">
        <text>L-phenylalanyl-tRNA(Phe) + an N-terminal L-alpha-aminoacyl-[protein] = an N-terminal L-phenylalanyl-L-alpha-aminoacyl-[protein] + tRNA(Phe)</text>
        <dbReference type="Rhea" id="RHEA:43632"/>
        <dbReference type="Rhea" id="RHEA-COMP:9668"/>
        <dbReference type="Rhea" id="RHEA-COMP:9699"/>
        <dbReference type="Rhea" id="RHEA-COMP:10636"/>
        <dbReference type="Rhea" id="RHEA-COMP:10637"/>
        <dbReference type="ChEBI" id="CHEBI:78442"/>
        <dbReference type="ChEBI" id="CHEBI:78531"/>
        <dbReference type="ChEBI" id="CHEBI:78597"/>
        <dbReference type="ChEBI" id="CHEBI:83561"/>
        <dbReference type="EC" id="2.3.2.6"/>
    </reaction>
</comment>
<comment type="subcellular location">
    <subcellularLocation>
        <location evidence="1">Cytoplasm</location>
    </subcellularLocation>
</comment>
<comment type="similarity">
    <text evidence="1">Belongs to the L/F-transferase family.</text>
</comment>